<feature type="chain" id="PRO_1000082348" description="Urocanate hydratase">
    <location>
        <begin position="1"/>
        <end position="557"/>
    </location>
</feature>
<feature type="region of interest" description="Disordered" evidence="2">
    <location>
        <begin position="1"/>
        <end position="20"/>
    </location>
</feature>
<feature type="active site" evidence="1">
    <location>
        <position position="410"/>
    </location>
</feature>
<feature type="binding site" evidence="1">
    <location>
        <begin position="52"/>
        <end position="53"/>
    </location>
    <ligand>
        <name>NAD(+)</name>
        <dbReference type="ChEBI" id="CHEBI:57540"/>
    </ligand>
</feature>
<feature type="binding site" evidence="1">
    <location>
        <position position="130"/>
    </location>
    <ligand>
        <name>NAD(+)</name>
        <dbReference type="ChEBI" id="CHEBI:57540"/>
    </ligand>
</feature>
<feature type="binding site" evidence="1">
    <location>
        <begin position="176"/>
        <end position="178"/>
    </location>
    <ligand>
        <name>NAD(+)</name>
        <dbReference type="ChEBI" id="CHEBI:57540"/>
    </ligand>
</feature>
<feature type="binding site" evidence="1">
    <location>
        <position position="196"/>
    </location>
    <ligand>
        <name>NAD(+)</name>
        <dbReference type="ChEBI" id="CHEBI:57540"/>
    </ligand>
</feature>
<feature type="binding site" evidence="1">
    <location>
        <position position="201"/>
    </location>
    <ligand>
        <name>NAD(+)</name>
        <dbReference type="ChEBI" id="CHEBI:57540"/>
    </ligand>
</feature>
<feature type="binding site" evidence="1">
    <location>
        <begin position="242"/>
        <end position="243"/>
    </location>
    <ligand>
        <name>NAD(+)</name>
        <dbReference type="ChEBI" id="CHEBI:57540"/>
    </ligand>
</feature>
<feature type="binding site" evidence="1">
    <location>
        <begin position="263"/>
        <end position="267"/>
    </location>
    <ligand>
        <name>NAD(+)</name>
        <dbReference type="ChEBI" id="CHEBI:57540"/>
    </ligand>
</feature>
<feature type="binding site" evidence="1">
    <location>
        <begin position="273"/>
        <end position="274"/>
    </location>
    <ligand>
        <name>NAD(+)</name>
        <dbReference type="ChEBI" id="CHEBI:57540"/>
    </ligand>
</feature>
<feature type="binding site" evidence="1">
    <location>
        <position position="322"/>
    </location>
    <ligand>
        <name>NAD(+)</name>
        <dbReference type="ChEBI" id="CHEBI:57540"/>
    </ligand>
</feature>
<feature type="binding site" evidence="1">
    <location>
        <position position="492"/>
    </location>
    <ligand>
        <name>NAD(+)</name>
        <dbReference type="ChEBI" id="CHEBI:57540"/>
    </ligand>
</feature>
<gene>
    <name evidence="1" type="primary">hutU</name>
    <name type="ordered locus">BSUIS_B0925</name>
</gene>
<reference key="1">
    <citation type="submission" date="2007-12" db="EMBL/GenBank/DDBJ databases">
        <title>Brucella suis ATCC 23445 whole genome shotgun sequencing project.</title>
        <authorList>
            <person name="Setubal J.C."/>
            <person name="Bowns C."/>
            <person name="Boyle S."/>
            <person name="Crasta O.R."/>
            <person name="Czar M.J."/>
            <person name="Dharmanolla C."/>
            <person name="Gillespie J.J."/>
            <person name="Kenyon R.W."/>
            <person name="Lu J."/>
            <person name="Mane S."/>
            <person name="Mohapatra S."/>
            <person name="Nagrani S."/>
            <person name="Purkayastha A."/>
            <person name="Rajasimha H.K."/>
            <person name="Shallom J.M."/>
            <person name="Shallom S."/>
            <person name="Shukla M."/>
            <person name="Snyder E.E."/>
            <person name="Sobral B.W."/>
            <person name="Wattam A.R."/>
            <person name="Will R."/>
            <person name="Williams K."/>
            <person name="Yoo H."/>
            <person name="Bruce D."/>
            <person name="Detter C."/>
            <person name="Munk C."/>
            <person name="Brettin T.S."/>
        </authorList>
    </citation>
    <scope>NUCLEOTIDE SEQUENCE [LARGE SCALE GENOMIC DNA]</scope>
    <source>
        <strain>ATCC 23445 / NCTC 10510</strain>
    </source>
</reference>
<proteinExistence type="inferred from homology"/>
<comment type="function">
    <text evidence="1">Catalyzes the conversion of urocanate to 4-imidazolone-5-propionate.</text>
</comment>
<comment type="catalytic activity">
    <reaction evidence="1">
        <text>4-imidazolone-5-propanoate = trans-urocanate + H2O</text>
        <dbReference type="Rhea" id="RHEA:13101"/>
        <dbReference type="ChEBI" id="CHEBI:15377"/>
        <dbReference type="ChEBI" id="CHEBI:17771"/>
        <dbReference type="ChEBI" id="CHEBI:77893"/>
        <dbReference type="EC" id="4.2.1.49"/>
    </reaction>
</comment>
<comment type="cofactor">
    <cofactor evidence="1">
        <name>NAD(+)</name>
        <dbReference type="ChEBI" id="CHEBI:57540"/>
    </cofactor>
    <text evidence="1">Binds 1 NAD(+) per subunit.</text>
</comment>
<comment type="pathway">
    <text evidence="1">Amino-acid degradation; L-histidine degradation into L-glutamate; N-formimidoyl-L-glutamate from L-histidine: step 2/3.</text>
</comment>
<comment type="subcellular location">
    <subcellularLocation>
        <location evidence="1">Cytoplasm</location>
    </subcellularLocation>
</comment>
<comment type="similarity">
    <text evidence="1">Belongs to the urocanase family.</text>
</comment>
<sequence length="557" mass="61272">MSNPRHNEREVRSPRGDELNAKSWLTEAPLRMLMNNLDPDVAERPHELVVYGGIGRAARTWDDFDRIVATLKTLNDDETLLVQSGKPVGVFRTHKDAPRVLIANSNLVPHWANWDHFNELDKKDLAMYGQMTAGSWIYIGAQGIVQGTYETFVEAGRQHYGGNLKGRWILTGGLGGMGGAQPLAAVMAGACCLAVECDETRADFRLRTRYVDEKTHSLDEALAKIDAWTKAGEAKSIALIGNAAEIFPELVKRGVKPDIVTDQTSAHDPVHGYLPLGWTVAEWRAKQENDPKAVEKAARASMKVQVQAMLDFWNAGIPTVDYGNNIRQMALEEGLENAFAFPGFVPAYIRPLFCRGIGPFRWAALSGDPEDIAKTDAKVKELLPDNKHLHNWLDMAKERIAFQGLPARICWVGLGDRHRLGLAFNEMVRNGELKAPIVIGRDHLDSGSVASPNRETEAMKDGSDAVSDWPLLNALLNTASGATWVSLHHGGGVGMGFSQHAGMVICCDGTEDADRRLERVLWNDPATGVMRHADAGYDIALDWARKQGLRLPAILGN</sequence>
<name>HUTU_BRUSI</name>
<protein>
    <recommendedName>
        <fullName evidence="1">Urocanate hydratase</fullName>
        <shortName evidence="1">Urocanase</shortName>
        <ecNumber evidence="1">4.2.1.49</ecNumber>
    </recommendedName>
    <alternativeName>
        <fullName evidence="1">Imidazolonepropionate hydrolase</fullName>
    </alternativeName>
</protein>
<accession>A9WVU5</accession>
<organism>
    <name type="scientific">Brucella suis (strain ATCC 23445 / NCTC 10510)</name>
    <dbReference type="NCBI Taxonomy" id="470137"/>
    <lineage>
        <taxon>Bacteria</taxon>
        <taxon>Pseudomonadati</taxon>
        <taxon>Pseudomonadota</taxon>
        <taxon>Alphaproteobacteria</taxon>
        <taxon>Hyphomicrobiales</taxon>
        <taxon>Brucellaceae</taxon>
        <taxon>Brucella/Ochrobactrum group</taxon>
        <taxon>Brucella</taxon>
    </lineage>
</organism>
<evidence type="ECO:0000255" key="1">
    <source>
        <dbReference type="HAMAP-Rule" id="MF_00577"/>
    </source>
</evidence>
<evidence type="ECO:0000256" key="2">
    <source>
        <dbReference type="SAM" id="MobiDB-lite"/>
    </source>
</evidence>
<dbReference type="EC" id="4.2.1.49" evidence="1"/>
<dbReference type="EMBL" id="CP000912">
    <property type="protein sequence ID" value="ABY39881.1"/>
    <property type="molecule type" value="Genomic_DNA"/>
</dbReference>
<dbReference type="RefSeq" id="WP_006199088.1">
    <property type="nucleotide sequence ID" value="NC_010167.1"/>
</dbReference>
<dbReference type="SMR" id="A9WVU5"/>
<dbReference type="KEGG" id="bmt:BSUIS_B0925"/>
<dbReference type="HOGENOM" id="CLU_018868_0_1_5"/>
<dbReference type="UniPathway" id="UPA00379">
    <property type="reaction ID" value="UER00550"/>
</dbReference>
<dbReference type="Proteomes" id="UP000008545">
    <property type="component" value="Chromosome II"/>
</dbReference>
<dbReference type="GO" id="GO:0005737">
    <property type="term" value="C:cytoplasm"/>
    <property type="evidence" value="ECO:0007669"/>
    <property type="project" value="UniProtKB-SubCell"/>
</dbReference>
<dbReference type="GO" id="GO:0016153">
    <property type="term" value="F:urocanate hydratase activity"/>
    <property type="evidence" value="ECO:0007669"/>
    <property type="project" value="UniProtKB-UniRule"/>
</dbReference>
<dbReference type="GO" id="GO:0019556">
    <property type="term" value="P:L-histidine catabolic process to glutamate and formamide"/>
    <property type="evidence" value="ECO:0007669"/>
    <property type="project" value="UniProtKB-UniPathway"/>
</dbReference>
<dbReference type="GO" id="GO:0019557">
    <property type="term" value="P:L-histidine catabolic process to glutamate and formate"/>
    <property type="evidence" value="ECO:0007669"/>
    <property type="project" value="UniProtKB-UniPathway"/>
</dbReference>
<dbReference type="FunFam" id="3.40.50.10730:FF:000001">
    <property type="entry name" value="Urocanate hydratase"/>
    <property type="match status" value="1"/>
</dbReference>
<dbReference type="Gene3D" id="3.40.50.10730">
    <property type="entry name" value="Urocanase like domains"/>
    <property type="match status" value="1"/>
</dbReference>
<dbReference type="Gene3D" id="3.40.1770.10">
    <property type="entry name" value="Urocanase superfamily"/>
    <property type="match status" value="1"/>
</dbReference>
<dbReference type="HAMAP" id="MF_00577">
    <property type="entry name" value="HutU"/>
    <property type="match status" value="1"/>
</dbReference>
<dbReference type="InterPro" id="IPR055351">
    <property type="entry name" value="Urocanase"/>
</dbReference>
<dbReference type="InterPro" id="IPR023637">
    <property type="entry name" value="Urocanase-like"/>
</dbReference>
<dbReference type="InterPro" id="IPR035401">
    <property type="entry name" value="Urocanase_C"/>
</dbReference>
<dbReference type="InterPro" id="IPR038364">
    <property type="entry name" value="Urocanase_central_sf"/>
</dbReference>
<dbReference type="InterPro" id="IPR023636">
    <property type="entry name" value="Urocanase_CS"/>
</dbReference>
<dbReference type="InterPro" id="IPR035400">
    <property type="entry name" value="Urocanase_N"/>
</dbReference>
<dbReference type="InterPro" id="IPR035085">
    <property type="entry name" value="Urocanase_Rossmann-like"/>
</dbReference>
<dbReference type="InterPro" id="IPR036190">
    <property type="entry name" value="Urocanase_sf"/>
</dbReference>
<dbReference type="NCBIfam" id="TIGR01228">
    <property type="entry name" value="hutU"/>
    <property type="match status" value="1"/>
</dbReference>
<dbReference type="NCBIfam" id="NF003820">
    <property type="entry name" value="PRK05414.1"/>
    <property type="match status" value="1"/>
</dbReference>
<dbReference type="PANTHER" id="PTHR12216">
    <property type="entry name" value="UROCANATE HYDRATASE"/>
    <property type="match status" value="1"/>
</dbReference>
<dbReference type="PANTHER" id="PTHR12216:SF4">
    <property type="entry name" value="UROCANATE HYDRATASE"/>
    <property type="match status" value="1"/>
</dbReference>
<dbReference type="Pfam" id="PF01175">
    <property type="entry name" value="Urocanase"/>
    <property type="match status" value="1"/>
</dbReference>
<dbReference type="Pfam" id="PF17392">
    <property type="entry name" value="Urocanase_C"/>
    <property type="match status" value="1"/>
</dbReference>
<dbReference type="Pfam" id="PF17391">
    <property type="entry name" value="Urocanase_N"/>
    <property type="match status" value="1"/>
</dbReference>
<dbReference type="PIRSF" id="PIRSF001423">
    <property type="entry name" value="Urocanate_hydrat"/>
    <property type="match status" value="1"/>
</dbReference>
<dbReference type="SUPFAM" id="SSF111326">
    <property type="entry name" value="Urocanase"/>
    <property type="match status" value="1"/>
</dbReference>
<dbReference type="PROSITE" id="PS01233">
    <property type="entry name" value="UROCANASE"/>
    <property type="match status" value="1"/>
</dbReference>
<keyword id="KW-0963">Cytoplasm</keyword>
<keyword id="KW-0369">Histidine metabolism</keyword>
<keyword id="KW-0456">Lyase</keyword>
<keyword id="KW-0520">NAD</keyword>